<accession>A8GLE3</accession>
<name>RL33_SERP5</name>
<reference key="1">
    <citation type="submission" date="2007-09" db="EMBL/GenBank/DDBJ databases">
        <title>Complete sequence of chromosome of Serratia proteamaculans 568.</title>
        <authorList>
            <consortium name="US DOE Joint Genome Institute"/>
            <person name="Copeland A."/>
            <person name="Lucas S."/>
            <person name="Lapidus A."/>
            <person name="Barry K."/>
            <person name="Glavina del Rio T."/>
            <person name="Dalin E."/>
            <person name="Tice H."/>
            <person name="Pitluck S."/>
            <person name="Chain P."/>
            <person name="Malfatti S."/>
            <person name="Shin M."/>
            <person name="Vergez L."/>
            <person name="Schmutz J."/>
            <person name="Larimer F."/>
            <person name="Land M."/>
            <person name="Hauser L."/>
            <person name="Kyrpides N."/>
            <person name="Kim E."/>
            <person name="Taghavi S."/>
            <person name="Newman L."/>
            <person name="Vangronsveld J."/>
            <person name="van der Lelie D."/>
            <person name="Richardson P."/>
        </authorList>
    </citation>
    <scope>NUCLEOTIDE SEQUENCE [LARGE SCALE GENOMIC DNA]</scope>
    <source>
        <strain>568</strain>
    </source>
</reference>
<protein>
    <recommendedName>
        <fullName evidence="1">Large ribosomal subunit protein bL33</fullName>
    </recommendedName>
    <alternativeName>
        <fullName evidence="2">50S ribosomal protein L33</fullName>
    </alternativeName>
</protein>
<keyword id="KW-0687">Ribonucleoprotein</keyword>
<keyword id="KW-0689">Ribosomal protein</keyword>
<feature type="chain" id="PRO_1000059286" description="Large ribosomal subunit protein bL33">
    <location>
        <begin position="1"/>
        <end position="55"/>
    </location>
</feature>
<gene>
    <name evidence="1" type="primary">rpmG</name>
    <name type="ordered locus">Spro_4840</name>
</gene>
<dbReference type="EMBL" id="CP000826">
    <property type="protein sequence ID" value="ABV43933.1"/>
    <property type="molecule type" value="Genomic_DNA"/>
</dbReference>
<dbReference type="SMR" id="A8GLE3"/>
<dbReference type="STRING" id="399741.Spro_4840"/>
<dbReference type="KEGG" id="spe:Spro_4840"/>
<dbReference type="eggNOG" id="COG0267">
    <property type="taxonomic scope" value="Bacteria"/>
</dbReference>
<dbReference type="HOGENOM" id="CLU_190949_1_1_6"/>
<dbReference type="OrthoDB" id="21586at2"/>
<dbReference type="GO" id="GO:0022625">
    <property type="term" value="C:cytosolic large ribosomal subunit"/>
    <property type="evidence" value="ECO:0007669"/>
    <property type="project" value="TreeGrafter"/>
</dbReference>
<dbReference type="GO" id="GO:0003735">
    <property type="term" value="F:structural constituent of ribosome"/>
    <property type="evidence" value="ECO:0007669"/>
    <property type="project" value="InterPro"/>
</dbReference>
<dbReference type="GO" id="GO:0006412">
    <property type="term" value="P:translation"/>
    <property type="evidence" value="ECO:0007669"/>
    <property type="project" value="UniProtKB-UniRule"/>
</dbReference>
<dbReference type="FunFam" id="2.20.28.120:FF:000001">
    <property type="entry name" value="50S ribosomal protein L33"/>
    <property type="match status" value="1"/>
</dbReference>
<dbReference type="Gene3D" id="2.20.28.120">
    <property type="entry name" value="Ribosomal protein L33"/>
    <property type="match status" value="1"/>
</dbReference>
<dbReference type="HAMAP" id="MF_00294">
    <property type="entry name" value="Ribosomal_bL33"/>
    <property type="match status" value="1"/>
</dbReference>
<dbReference type="InterPro" id="IPR001705">
    <property type="entry name" value="Ribosomal_bL33"/>
</dbReference>
<dbReference type="InterPro" id="IPR018264">
    <property type="entry name" value="Ribosomal_bL33_CS"/>
</dbReference>
<dbReference type="InterPro" id="IPR038584">
    <property type="entry name" value="Ribosomal_bL33_sf"/>
</dbReference>
<dbReference type="InterPro" id="IPR011332">
    <property type="entry name" value="Ribosomal_zn-bd"/>
</dbReference>
<dbReference type="NCBIfam" id="NF001860">
    <property type="entry name" value="PRK00595.1"/>
    <property type="match status" value="1"/>
</dbReference>
<dbReference type="NCBIfam" id="TIGR01023">
    <property type="entry name" value="rpmG_bact"/>
    <property type="match status" value="1"/>
</dbReference>
<dbReference type="PANTHER" id="PTHR15238">
    <property type="entry name" value="54S RIBOSOMAL PROTEIN L39, MITOCHONDRIAL"/>
    <property type="match status" value="1"/>
</dbReference>
<dbReference type="PANTHER" id="PTHR15238:SF1">
    <property type="entry name" value="LARGE RIBOSOMAL SUBUNIT PROTEIN BL33M"/>
    <property type="match status" value="1"/>
</dbReference>
<dbReference type="Pfam" id="PF00471">
    <property type="entry name" value="Ribosomal_L33"/>
    <property type="match status" value="1"/>
</dbReference>
<dbReference type="SUPFAM" id="SSF57829">
    <property type="entry name" value="Zn-binding ribosomal proteins"/>
    <property type="match status" value="1"/>
</dbReference>
<dbReference type="PROSITE" id="PS00582">
    <property type="entry name" value="RIBOSOMAL_L33"/>
    <property type="match status" value="1"/>
</dbReference>
<comment type="similarity">
    <text evidence="1">Belongs to the bacterial ribosomal protein bL33 family.</text>
</comment>
<proteinExistence type="inferred from homology"/>
<evidence type="ECO:0000255" key="1">
    <source>
        <dbReference type="HAMAP-Rule" id="MF_00294"/>
    </source>
</evidence>
<evidence type="ECO:0000305" key="2"/>
<organism>
    <name type="scientific">Serratia proteamaculans (strain 568)</name>
    <dbReference type="NCBI Taxonomy" id="399741"/>
    <lineage>
        <taxon>Bacteria</taxon>
        <taxon>Pseudomonadati</taxon>
        <taxon>Pseudomonadota</taxon>
        <taxon>Gammaproteobacteria</taxon>
        <taxon>Enterobacterales</taxon>
        <taxon>Yersiniaceae</taxon>
        <taxon>Serratia</taxon>
    </lineage>
</organism>
<sequence>MAKGVREKIKLVSSAGTGHFYTTTKNKRTKPEKLELKKFDPVVRQHVIYKEAKIK</sequence>